<dbReference type="EMBL" id="CU459141">
    <property type="protein sequence ID" value="CAM86845.1"/>
    <property type="molecule type" value="Genomic_DNA"/>
</dbReference>
<dbReference type="RefSeq" id="WP_001024697.1">
    <property type="nucleotide sequence ID" value="NZ_JBDGFB010000001.1"/>
</dbReference>
<dbReference type="SMR" id="B0VDW7"/>
<dbReference type="EnsemblBacteria" id="CAM86845">
    <property type="protein sequence ID" value="CAM86845"/>
    <property type="gene ID" value="ABAYE1967"/>
</dbReference>
<dbReference type="KEGG" id="aby:ABAYE1967"/>
<dbReference type="HOGENOM" id="CLU_140930_0_0_6"/>
<dbReference type="GO" id="GO:0043590">
    <property type="term" value="C:bacterial nucleoid"/>
    <property type="evidence" value="ECO:0007669"/>
    <property type="project" value="UniProtKB-UniRule"/>
</dbReference>
<dbReference type="GO" id="GO:0005829">
    <property type="term" value="C:cytosol"/>
    <property type="evidence" value="ECO:0007669"/>
    <property type="project" value="TreeGrafter"/>
</dbReference>
<dbReference type="GO" id="GO:0003677">
    <property type="term" value="F:DNA binding"/>
    <property type="evidence" value="ECO:0007669"/>
    <property type="project" value="UniProtKB-UniRule"/>
</dbReference>
<dbReference type="Gene3D" id="3.30.1310.10">
    <property type="entry name" value="Nucleoid-associated protein YbaB-like domain"/>
    <property type="match status" value="1"/>
</dbReference>
<dbReference type="HAMAP" id="MF_00274">
    <property type="entry name" value="DNA_YbaB_EbfC"/>
    <property type="match status" value="1"/>
</dbReference>
<dbReference type="InterPro" id="IPR036894">
    <property type="entry name" value="YbaB-like_sf"/>
</dbReference>
<dbReference type="InterPro" id="IPR004401">
    <property type="entry name" value="YbaB/EbfC"/>
</dbReference>
<dbReference type="NCBIfam" id="TIGR00103">
    <property type="entry name" value="DNA_YbaB_EbfC"/>
    <property type="match status" value="1"/>
</dbReference>
<dbReference type="PANTHER" id="PTHR33449">
    <property type="entry name" value="NUCLEOID-ASSOCIATED PROTEIN YBAB"/>
    <property type="match status" value="1"/>
</dbReference>
<dbReference type="PANTHER" id="PTHR33449:SF1">
    <property type="entry name" value="NUCLEOID-ASSOCIATED PROTEIN YBAB"/>
    <property type="match status" value="1"/>
</dbReference>
<dbReference type="Pfam" id="PF02575">
    <property type="entry name" value="YbaB_DNA_bd"/>
    <property type="match status" value="1"/>
</dbReference>
<dbReference type="PIRSF" id="PIRSF004555">
    <property type="entry name" value="UCP004555"/>
    <property type="match status" value="1"/>
</dbReference>
<dbReference type="SUPFAM" id="SSF82607">
    <property type="entry name" value="YbaB-like"/>
    <property type="match status" value="1"/>
</dbReference>
<comment type="function">
    <text evidence="1">Binds to DNA and alters its conformation. May be involved in regulation of gene expression, nucleoid organization and DNA protection.</text>
</comment>
<comment type="subunit">
    <text evidence="1">Homodimer.</text>
</comment>
<comment type="subcellular location">
    <subcellularLocation>
        <location evidence="1">Cytoplasm</location>
        <location evidence="1">Nucleoid</location>
    </subcellularLocation>
</comment>
<comment type="similarity">
    <text evidence="1">Belongs to the YbaB/EbfC family.</text>
</comment>
<accession>B0VDW7</accession>
<organism>
    <name type="scientific">Acinetobacter baumannii (strain AYE)</name>
    <dbReference type="NCBI Taxonomy" id="509173"/>
    <lineage>
        <taxon>Bacteria</taxon>
        <taxon>Pseudomonadati</taxon>
        <taxon>Pseudomonadota</taxon>
        <taxon>Gammaproteobacteria</taxon>
        <taxon>Moraxellales</taxon>
        <taxon>Moraxellaceae</taxon>
        <taxon>Acinetobacter</taxon>
        <taxon>Acinetobacter calcoaceticus/baumannii complex</taxon>
    </lineage>
</organism>
<name>Y1967_ACIBY</name>
<evidence type="ECO:0000255" key="1">
    <source>
        <dbReference type="HAMAP-Rule" id="MF_00274"/>
    </source>
</evidence>
<reference key="1">
    <citation type="journal article" date="2008" name="PLoS ONE">
        <title>Comparative analysis of Acinetobacters: three genomes for three lifestyles.</title>
        <authorList>
            <person name="Vallenet D."/>
            <person name="Nordmann P."/>
            <person name="Barbe V."/>
            <person name="Poirel L."/>
            <person name="Mangenot S."/>
            <person name="Bataille E."/>
            <person name="Dossat C."/>
            <person name="Gas S."/>
            <person name="Kreimeyer A."/>
            <person name="Lenoble P."/>
            <person name="Oztas S."/>
            <person name="Poulain J."/>
            <person name="Segurens B."/>
            <person name="Robert C."/>
            <person name="Abergel C."/>
            <person name="Claverie J.-M."/>
            <person name="Raoult D."/>
            <person name="Medigue C."/>
            <person name="Weissenbach J."/>
            <person name="Cruveiller S."/>
        </authorList>
    </citation>
    <scope>NUCLEOTIDE SEQUENCE [LARGE SCALE GENOMIC DNA]</scope>
    <source>
        <strain>AYE</strain>
    </source>
</reference>
<sequence length="109" mass="12015">MNINMLMQQAQRMQKDMESNIKKAKEELAQTEVHAEAGGGLVKVTMTGRYIVKRIEINPELLQDEPDMIEDLIAAAVNDAVRQAEVVSEEKMQKANSGMGLPPGLAGMF</sequence>
<gene>
    <name type="ordered locus">ABAYE1967</name>
</gene>
<keyword id="KW-0963">Cytoplasm</keyword>
<keyword id="KW-0238">DNA-binding</keyword>
<feature type="chain" id="PRO_1000114574" description="Nucleoid-associated protein ABAYE1967">
    <location>
        <begin position="1"/>
        <end position="109"/>
    </location>
</feature>
<proteinExistence type="inferred from homology"/>
<protein>
    <recommendedName>
        <fullName evidence="1">Nucleoid-associated protein ABAYE1967</fullName>
    </recommendedName>
</protein>